<name>MRAZ_UREPA</name>
<evidence type="ECO:0000255" key="1">
    <source>
        <dbReference type="HAMAP-Rule" id="MF_01008"/>
    </source>
</evidence>
<evidence type="ECO:0000255" key="2">
    <source>
        <dbReference type="PROSITE-ProRule" id="PRU01076"/>
    </source>
</evidence>
<proteinExistence type="inferred from homology"/>
<keyword id="KW-0963">Cytoplasm</keyword>
<keyword id="KW-0238">DNA-binding</keyword>
<keyword id="KW-1185">Reference proteome</keyword>
<keyword id="KW-0677">Repeat</keyword>
<keyword id="KW-0804">Transcription</keyword>
<keyword id="KW-0805">Transcription regulation</keyword>
<gene>
    <name evidence="1" type="primary">mraZ</name>
    <name type="ordered locus">UU385</name>
</gene>
<accession>Q9PQA5</accession>
<comment type="subunit">
    <text evidence="1">Forms oligomers.</text>
</comment>
<comment type="subcellular location">
    <subcellularLocation>
        <location evidence="1">Cytoplasm</location>
        <location evidence="1">Nucleoid</location>
    </subcellularLocation>
</comment>
<comment type="similarity">
    <text evidence="1">Belongs to the MraZ family.</text>
</comment>
<protein>
    <recommendedName>
        <fullName>Transcriptional regulator MraZ</fullName>
    </recommendedName>
</protein>
<feature type="chain" id="PRO_0000108555" description="Transcriptional regulator MraZ">
    <location>
        <begin position="1"/>
        <end position="145"/>
    </location>
</feature>
<feature type="domain" description="SpoVT-AbrB 1" evidence="2">
    <location>
        <begin position="5"/>
        <end position="49"/>
    </location>
</feature>
<feature type="domain" description="SpoVT-AbrB 2" evidence="2">
    <location>
        <begin position="78"/>
        <end position="121"/>
    </location>
</feature>
<reference key="1">
    <citation type="journal article" date="2000" name="Nature">
        <title>The complete sequence of the mucosal pathogen Ureaplasma urealyticum.</title>
        <authorList>
            <person name="Glass J.I."/>
            <person name="Lefkowitz E.J."/>
            <person name="Glass J.S."/>
            <person name="Heiner C.R."/>
            <person name="Chen E.Y."/>
            <person name="Cassell G.H."/>
        </authorList>
    </citation>
    <scope>NUCLEOTIDE SEQUENCE [LARGE SCALE GENOMIC DNA]</scope>
    <source>
        <strain>ATCC 700970</strain>
    </source>
</reference>
<organism>
    <name type="scientific">Ureaplasma parvum serovar 3 (strain ATCC 700970)</name>
    <dbReference type="NCBI Taxonomy" id="273119"/>
    <lineage>
        <taxon>Bacteria</taxon>
        <taxon>Bacillati</taxon>
        <taxon>Mycoplasmatota</taxon>
        <taxon>Mycoplasmoidales</taxon>
        <taxon>Mycoplasmoidaceae</taxon>
        <taxon>Ureaplasma</taxon>
    </lineage>
</organism>
<dbReference type="EMBL" id="AF222894">
    <property type="protein sequence ID" value="AAF30795.1"/>
    <property type="molecule type" value="Genomic_DNA"/>
</dbReference>
<dbReference type="RefSeq" id="WP_010891757.1">
    <property type="nucleotide sequence ID" value="NC_002162.1"/>
</dbReference>
<dbReference type="SMR" id="Q9PQA5"/>
<dbReference type="STRING" id="273119.UU385"/>
<dbReference type="EnsemblBacteria" id="AAF30795">
    <property type="protein sequence ID" value="AAF30795"/>
    <property type="gene ID" value="UU385"/>
</dbReference>
<dbReference type="GeneID" id="29672219"/>
<dbReference type="KEGG" id="uur:UU385"/>
<dbReference type="PATRIC" id="fig|273119.6.peg.400"/>
<dbReference type="eggNOG" id="COG2001">
    <property type="taxonomic scope" value="Bacteria"/>
</dbReference>
<dbReference type="HOGENOM" id="CLU_107907_0_0_14"/>
<dbReference type="OrthoDB" id="9807753at2"/>
<dbReference type="Proteomes" id="UP000000423">
    <property type="component" value="Chromosome"/>
</dbReference>
<dbReference type="GO" id="GO:0005737">
    <property type="term" value="C:cytoplasm"/>
    <property type="evidence" value="ECO:0007669"/>
    <property type="project" value="UniProtKB-UniRule"/>
</dbReference>
<dbReference type="GO" id="GO:0009295">
    <property type="term" value="C:nucleoid"/>
    <property type="evidence" value="ECO:0007669"/>
    <property type="project" value="UniProtKB-SubCell"/>
</dbReference>
<dbReference type="GO" id="GO:0003700">
    <property type="term" value="F:DNA-binding transcription factor activity"/>
    <property type="evidence" value="ECO:0007669"/>
    <property type="project" value="UniProtKB-UniRule"/>
</dbReference>
<dbReference type="GO" id="GO:0000976">
    <property type="term" value="F:transcription cis-regulatory region binding"/>
    <property type="evidence" value="ECO:0007669"/>
    <property type="project" value="TreeGrafter"/>
</dbReference>
<dbReference type="GO" id="GO:2000143">
    <property type="term" value="P:negative regulation of DNA-templated transcription initiation"/>
    <property type="evidence" value="ECO:0007669"/>
    <property type="project" value="TreeGrafter"/>
</dbReference>
<dbReference type="CDD" id="cd16321">
    <property type="entry name" value="MraZ_C"/>
    <property type="match status" value="1"/>
</dbReference>
<dbReference type="CDD" id="cd16320">
    <property type="entry name" value="MraZ_N"/>
    <property type="match status" value="1"/>
</dbReference>
<dbReference type="Gene3D" id="3.40.1550.20">
    <property type="entry name" value="Transcriptional regulator MraZ domain"/>
    <property type="match status" value="1"/>
</dbReference>
<dbReference type="HAMAP" id="MF_01008">
    <property type="entry name" value="MraZ"/>
    <property type="match status" value="1"/>
</dbReference>
<dbReference type="InterPro" id="IPR003444">
    <property type="entry name" value="MraZ"/>
</dbReference>
<dbReference type="InterPro" id="IPR035644">
    <property type="entry name" value="MraZ_C"/>
</dbReference>
<dbReference type="InterPro" id="IPR020603">
    <property type="entry name" value="MraZ_dom"/>
</dbReference>
<dbReference type="InterPro" id="IPR035642">
    <property type="entry name" value="MraZ_N"/>
</dbReference>
<dbReference type="InterPro" id="IPR038619">
    <property type="entry name" value="MraZ_sf"/>
</dbReference>
<dbReference type="InterPro" id="IPR007159">
    <property type="entry name" value="SpoVT-AbrB_dom"/>
</dbReference>
<dbReference type="InterPro" id="IPR037914">
    <property type="entry name" value="SpoVT-AbrB_sf"/>
</dbReference>
<dbReference type="NCBIfam" id="TIGR00242">
    <property type="entry name" value="division/cell wall cluster transcriptional repressor MraZ"/>
    <property type="match status" value="1"/>
</dbReference>
<dbReference type="PANTHER" id="PTHR34701">
    <property type="entry name" value="TRANSCRIPTIONAL REGULATOR MRAZ"/>
    <property type="match status" value="1"/>
</dbReference>
<dbReference type="PANTHER" id="PTHR34701:SF1">
    <property type="entry name" value="TRANSCRIPTIONAL REGULATOR MRAZ"/>
    <property type="match status" value="1"/>
</dbReference>
<dbReference type="Pfam" id="PF02381">
    <property type="entry name" value="MraZ"/>
    <property type="match status" value="2"/>
</dbReference>
<dbReference type="SUPFAM" id="SSF89447">
    <property type="entry name" value="AbrB/MazE/MraZ-like"/>
    <property type="match status" value="1"/>
</dbReference>
<dbReference type="PROSITE" id="PS51740">
    <property type="entry name" value="SPOVT_ABRB"/>
    <property type="match status" value="2"/>
</dbReference>
<sequence>MFIGTYNHSIDSKNRMLVPSKVKATLGEAIFVYLSLGFDGNIDMRLESEFNQFVNNINNLLIGSKEARNLTRLILSQTYKIEIDSASRILIPQNLIDKAKIKKDIYIIGTNDRYEIWAKEVYDDFSLNQESTLSDLAEKLLINGI</sequence>